<keyword id="KW-0027">Amidation</keyword>
<keyword id="KW-0044">Antibiotic</keyword>
<keyword id="KW-0929">Antimicrobial</keyword>
<keyword id="KW-0903">Direct protein sequencing</keyword>
<keyword id="KW-0964">Secreted</keyword>
<keyword id="KW-0732">Signal</keyword>
<keyword id="KW-0800">Toxin</keyword>
<proteinExistence type="evidence at protein level"/>
<name>CTX4_LACTA</name>
<comment type="function">
    <text evidence="2">Insecticidal and antimicrobial peptide. Has insecticidal activity against larvae of flesh fly S.carnaria. Has antibacterial activity against Gram-positive bacterium B.subtilis B-501 (MIC=2.5 uM) and Gram-negative bacterium E.coli DH5alpha (MIC=10 uM).</text>
</comment>
<comment type="subcellular location">
    <subcellularLocation>
        <location evidence="2">Secreted</location>
    </subcellularLocation>
</comment>
<comment type="tissue specificity">
    <text evidence="5">Expressed by the venom gland.</text>
</comment>
<comment type="domain">
    <text evidence="5">The mature peptide may form alpha-helices which disrupt target cell membranes.</text>
</comment>
<comment type="mass spectrometry"/>
<comment type="toxic dose">
    <text evidence="2">LD(50) is 75 ug/g in larvae of flesh fly S.carnaria.</text>
</comment>
<comment type="similarity">
    <text evidence="4">Belongs to the cationic peptide 06 (cytoinsectotoxin) family.</text>
</comment>
<accession>C0HJV6</accession>
<accession>A0A1B3Z579</accession>
<organism>
    <name type="scientific">Lachesana tarabaevi</name>
    <name type="common">Spider</name>
    <dbReference type="NCBI Taxonomy" id="379576"/>
    <lineage>
        <taxon>Eukaryota</taxon>
        <taxon>Metazoa</taxon>
        <taxon>Ecdysozoa</taxon>
        <taxon>Arthropoda</taxon>
        <taxon>Chelicerata</taxon>
        <taxon>Arachnida</taxon>
        <taxon>Araneae</taxon>
        <taxon>Araneomorphae</taxon>
        <taxon>Entelegynae</taxon>
        <taxon>Entelegynae incertae sedis</taxon>
        <taxon>Zodariidae</taxon>
        <taxon>Lachesana</taxon>
    </lineage>
</organism>
<reference key="1">
    <citation type="journal article" date="2016" name="Biochem. J.">
        <title>Lachesana tarabaevi, an expert in membrane-active toxins.</title>
        <authorList>
            <person name="Kuzmenkov A.I."/>
            <person name="Sachkova M.Y."/>
            <person name="Kovalchuk S.I."/>
            <person name="Grishin E.V."/>
            <person name="Vassilevski A.A."/>
        </authorList>
    </citation>
    <scope>NUCLEOTIDE SEQUENCE [MRNA]</scope>
    <scope>PROTEIN SEQUENCE OF 63-123</scope>
    <scope>FUNCTION</scope>
    <scope>SUBCELLULAR LOCATION</scope>
    <scope>MASS SPECTROMETRY</scope>
    <scope>TOXIC DOSE</scope>
    <scope>AMIDATION AT PHE-123</scope>
    <source>
        <tissue>Venom</tissue>
    </source>
</reference>
<evidence type="ECO:0000255" key="1"/>
<evidence type="ECO:0000269" key="2">
    <source>
    </source>
</evidence>
<evidence type="ECO:0000303" key="3">
    <source>
    </source>
</evidence>
<evidence type="ECO:0000305" key="4"/>
<evidence type="ECO:0000305" key="5">
    <source>
    </source>
</evidence>
<protein>
    <recommendedName>
        <fullName evidence="3">Cytoinsectotoxin-4</fullName>
        <shortName evidence="3">CIT-4</shortName>
    </recommendedName>
</protein>
<dbReference type="EMBL" id="KT591340">
    <property type="protein sequence ID" value="AOH73462.1"/>
    <property type="molecule type" value="mRNA"/>
</dbReference>
<dbReference type="SMR" id="C0HJV6"/>
<dbReference type="TCDB" id="1.C.138.1.2">
    <property type="family name" value="the m-zodatoxin-lt8a spider toxin (zst) family"/>
</dbReference>
<dbReference type="GO" id="GO:0005576">
    <property type="term" value="C:extracellular region"/>
    <property type="evidence" value="ECO:0007669"/>
    <property type="project" value="UniProtKB-SubCell"/>
</dbReference>
<dbReference type="GO" id="GO:0090729">
    <property type="term" value="F:toxin activity"/>
    <property type="evidence" value="ECO:0007669"/>
    <property type="project" value="UniProtKB-KW"/>
</dbReference>
<dbReference type="GO" id="GO:0042742">
    <property type="term" value="P:defense response to bacterium"/>
    <property type="evidence" value="ECO:0007669"/>
    <property type="project" value="UniProtKB-KW"/>
</dbReference>
<dbReference type="InterPro" id="IPR018802">
    <property type="entry name" value="Latarcin_precursor"/>
</dbReference>
<dbReference type="Pfam" id="PF10279">
    <property type="entry name" value="Latarcin"/>
    <property type="match status" value="1"/>
</dbReference>
<sequence>MKCFILAAALVLAFACIAASEPAETENEDLDDLSDLEDEEWLDELEEAAEYLESLREFEESRGYKDYMSKAKDLYKDIKKDKRVKAVMKSSYMKEAKKLYKDNPVRDAYQVYKGVKAGGKLLFG</sequence>
<feature type="signal peptide" evidence="1">
    <location>
        <begin position="1"/>
        <end position="19"/>
    </location>
</feature>
<feature type="propeptide" id="PRO_0000444423" evidence="2">
    <location>
        <begin position="20"/>
        <end position="62"/>
    </location>
</feature>
<feature type="peptide" id="PRO_0000437252" description="Cytoinsectotoxin-4" evidence="2">
    <location>
        <begin position="63"/>
        <end position="123"/>
    </location>
</feature>
<feature type="modified residue" description="Phenylalanine amide" evidence="2">
    <location>
        <position position="123"/>
    </location>
</feature>